<keyword id="KW-0028">Amino-acid biosynthesis</keyword>
<keyword id="KW-0057">Aromatic amino acid biosynthesis</keyword>
<keyword id="KW-0210">Decarboxylase</keyword>
<keyword id="KW-0456">Lyase</keyword>
<keyword id="KW-0822">Tryptophan biosynthesis</keyword>
<name>TRPC_STAES</name>
<evidence type="ECO:0000255" key="1">
    <source>
        <dbReference type="HAMAP-Rule" id="MF_00134"/>
    </source>
</evidence>
<gene>
    <name evidence="1" type="primary">trpC</name>
    <name type="ordered locus">SE_1051</name>
</gene>
<reference key="1">
    <citation type="journal article" date="2003" name="Mol. Microbiol.">
        <title>Genome-based analysis of virulence genes in a non-biofilm-forming Staphylococcus epidermidis strain (ATCC 12228).</title>
        <authorList>
            <person name="Zhang Y.-Q."/>
            <person name="Ren S.-X."/>
            <person name="Li H.-L."/>
            <person name="Wang Y.-X."/>
            <person name="Fu G."/>
            <person name="Yang J."/>
            <person name="Qin Z.-Q."/>
            <person name="Miao Y.-G."/>
            <person name="Wang W.-Y."/>
            <person name="Chen R.-S."/>
            <person name="Shen Y."/>
            <person name="Chen Z."/>
            <person name="Yuan Z.-H."/>
            <person name="Zhao G.-P."/>
            <person name="Qu D."/>
            <person name="Danchin A."/>
            <person name="Wen Y.-M."/>
        </authorList>
    </citation>
    <scope>NUCLEOTIDE SEQUENCE [LARGE SCALE GENOMIC DNA]</scope>
    <source>
        <strain>ATCC 12228 / FDA PCI 1200</strain>
    </source>
</reference>
<accession>Q8CPB2</accession>
<proteinExistence type="inferred from homology"/>
<protein>
    <recommendedName>
        <fullName evidence="1">Indole-3-glycerol phosphate synthase</fullName>
        <shortName evidence="1">IGPS</shortName>
        <ecNumber evidence="1">4.1.1.48</ecNumber>
    </recommendedName>
</protein>
<organism>
    <name type="scientific">Staphylococcus epidermidis (strain ATCC 12228 / FDA PCI 1200)</name>
    <dbReference type="NCBI Taxonomy" id="176280"/>
    <lineage>
        <taxon>Bacteria</taxon>
        <taxon>Bacillati</taxon>
        <taxon>Bacillota</taxon>
        <taxon>Bacilli</taxon>
        <taxon>Bacillales</taxon>
        <taxon>Staphylococcaceae</taxon>
        <taxon>Staphylococcus</taxon>
    </lineage>
</organism>
<feature type="chain" id="PRO_0000154255" description="Indole-3-glycerol phosphate synthase">
    <location>
        <begin position="1"/>
        <end position="262"/>
    </location>
</feature>
<comment type="catalytic activity">
    <reaction evidence="1">
        <text>1-(2-carboxyphenylamino)-1-deoxy-D-ribulose 5-phosphate + H(+) = (1S,2R)-1-C-(indol-3-yl)glycerol 3-phosphate + CO2 + H2O</text>
        <dbReference type="Rhea" id="RHEA:23476"/>
        <dbReference type="ChEBI" id="CHEBI:15377"/>
        <dbReference type="ChEBI" id="CHEBI:15378"/>
        <dbReference type="ChEBI" id="CHEBI:16526"/>
        <dbReference type="ChEBI" id="CHEBI:58613"/>
        <dbReference type="ChEBI" id="CHEBI:58866"/>
        <dbReference type="EC" id="4.1.1.48"/>
    </reaction>
</comment>
<comment type="pathway">
    <text evidence="1">Amino-acid biosynthesis; L-tryptophan biosynthesis; L-tryptophan from chorismate: step 4/5.</text>
</comment>
<comment type="similarity">
    <text evidence="1">Belongs to the TrpC family.</text>
</comment>
<dbReference type="EC" id="4.1.1.48" evidence="1"/>
<dbReference type="EMBL" id="AE015929">
    <property type="protein sequence ID" value="AAO04648.1"/>
    <property type="molecule type" value="Genomic_DNA"/>
</dbReference>
<dbReference type="RefSeq" id="NP_764606.1">
    <property type="nucleotide sequence ID" value="NC_004461.1"/>
</dbReference>
<dbReference type="RefSeq" id="WP_002485159.1">
    <property type="nucleotide sequence ID" value="NC_004461.1"/>
</dbReference>
<dbReference type="SMR" id="Q8CPB2"/>
<dbReference type="KEGG" id="sep:SE_1051"/>
<dbReference type="PATRIC" id="fig|176280.10.peg.1027"/>
<dbReference type="eggNOG" id="COG0134">
    <property type="taxonomic scope" value="Bacteria"/>
</dbReference>
<dbReference type="HOGENOM" id="CLU_034247_2_1_9"/>
<dbReference type="OrthoDB" id="9804217at2"/>
<dbReference type="UniPathway" id="UPA00035">
    <property type="reaction ID" value="UER00043"/>
</dbReference>
<dbReference type="Proteomes" id="UP000001411">
    <property type="component" value="Chromosome"/>
</dbReference>
<dbReference type="GO" id="GO:0004425">
    <property type="term" value="F:indole-3-glycerol-phosphate synthase activity"/>
    <property type="evidence" value="ECO:0007669"/>
    <property type="project" value="UniProtKB-UniRule"/>
</dbReference>
<dbReference type="GO" id="GO:0004640">
    <property type="term" value="F:phosphoribosylanthranilate isomerase activity"/>
    <property type="evidence" value="ECO:0007669"/>
    <property type="project" value="TreeGrafter"/>
</dbReference>
<dbReference type="GO" id="GO:0000162">
    <property type="term" value="P:L-tryptophan biosynthetic process"/>
    <property type="evidence" value="ECO:0007669"/>
    <property type="project" value="UniProtKB-UniRule"/>
</dbReference>
<dbReference type="CDD" id="cd00331">
    <property type="entry name" value="IGPS"/>
    <property type="match status" value="1"/>
</dbReference>
<dbReference type="FunFam" id="3.20.20.70:FF:000024">
    <property type="entry name" value="Indole-3-glycerol phosphate synthase"/>
    <property type="match status" value="1"/>
</dbReference>
<dbReference type="Gene3D" id="3.20.20.70">
    <property type="entry name" value="Aldolase class I"/>
    <property type="match status" value="1"/>
</dbReference>
<dbReference type="HAMAP" id="MF_00134_B">
    <property type="entry name" value="IGPS_B"/>
    <property type="match status" value="1"/>
</dbReference>
<dbReference type="InterPro" id="IPR013785">
    <property type="entry name" value="Aldolase_TIM"/>
</dbReference>
<dbReference type="InterPro" id="IPR045186">
    <property type="entry name" value="Indole-3-glycerol_P_synth"/>
</dbReference>
<dbReference type="InterPro" id="IPR013798">
    <property type="entry name" value="Indole-3-glycerol_P_synth_dom"/>
</dbReference>
<dbReference type="InterPro" id="IPR001468">
    <property type="entry name" value="Indole-3-GlycerolPSynthase_CS"/>
</dbReference>
<dbReference type="InterPro" id="IPR011060">
    <property type="entry name" value="RibuloseP-bd_barrel"/>
</dbReference>
<dbReference type="NCBIfam" id="NF001371">
    <property type="entry name" value="PRK00278.1-3"/>
    <property type="match status" value="1"/>
</dbReference>
<dbReference type="PANTHER" id="PTHR22854:SF2">
    <property type="entry name" value="INDOLE-3-GLYCEROL-PHOSPHATE SYNTHASE"/>
    <property type="match status" value="1"/>
</dbReference>
<dbReference type="PANTHER" id="PTHR22854">
    <property type="entry name" value="TRYPTOPHAN BIOSYNTHESIS PROTEIN"/>
    <property type="match status" value="1"/>
</dbReference>
<dbReference type="Pfam" id="PF00218">
    <property type="entry name" value="IGPS"/>
    <property type="match status" value="1"/>
</dbReference>
<dbReference type="SUPFAM" id="SSF51366">
    <property type="entry name" value="Ribulose-phoshate binding barrel"/>
    <property type="match status" value="1"/>
</dbReference>
<dbReference type="PROSITE" id="PS00614">
    <property type="entry name" value="IGPS"/>
    <property type="match status" value="1"/>
</dbReference>
<sequence>MTILNEIIEYKKTLLERKYYDKKLEILQDNGNVKRRKLIDSLNYDRTLSVIAEIKSKSPSVPQLPQRDLVQQVKDYQKYGANAISILTDEKYFGGSFERLNQLSKITSLPVLCKDFIIDKIQIDVAKRAGASIILLIVNILSDDQLKELYSYAINHNLEVLVEVHTIRELERAHQINPKIIGVNNRDLKRFETDVLHTNKLLKFKKSNCCYISESGIHTKEDVEKIVDSNIDGLLVGEALMKTNDLSQFLPSLKLKKNLYDS</sequence>